<feature type="chain" id="PRO_1000016926" description="Ribose-5-phosphate isomerase A">
    <location>
        <begin position="1"/>
        <end position="224"/>
    </location>
</feature>
<feature type="active site" description="Proton acceptor" evidence="1">
    <location>
        <position position="109"/>
    </location>
</feature>
<feature type="binding site" evidence="1">
    <location>
        <begin position="34"/>
        <end position="37"/>
    </location>
    <ligand>
        <name>substrate</name>
    </ligand>
</feature>
<feature type="binding site" evidence="1">
    <location>
        <begin position="87"/>
        <end position="90"/>
    </location>
    <ligand>
        <name>substrate</name>
    </ligand>
</feature>
<feature type="binding site" evidence="1">
    <location>
        <begin position="100"/>
        <end position="103"/>
    </location>
    <ligand>
        <name>substrate</name>
    </ligand>
</feature>
<feature type="binding site" evidence="1">
    <location>
        <position position="127"/>
    </location>
    <ligand>
        <name>substrate</name>
    </ligand>
</feature>
<feature type="helix" evidence="2">
    <location>
        <begin position="6"/>
        <end position="21"/>
    </location>
</feature>
<feature type="strand" evidence="2">
    <location>
        <begin position="26"/>
        <end position="32"/>
    </location>
</feature>
<feature type="helix" evidence="2">
    <location>
        <begin position="36"/>
        <end position="44"/>
    </location>
</feature>
<feature type="helix" evidence="2">
    <location>
        <begin position="45"/>
        <end position="48"/>
    </location>
</feature>
<feature type="turn" evidence="2">
    <location>
        <begin position="49"/>
        <end position="51"/>
    </location>
</feature>
<feature type="strand" evidence="2">
    <location>
        <begin position="52"/>
        <end position="58"/>
    </location>
</feature>
<feature type="helix" evidence="2">
    <location>
        <begin position="60"/>
        <end position="68"/>
    </location>
</feature>
<feature type="helix" evidence="2">
    <location>
        <begin position="76"/>
        <end position="79"/>
    </location>
</feature>
<feature type="strand" evidence="2">
    <location>
        <begin position="81"/>
        <end position="87"/>
    </location>
</feature>
<feature type="strand" evidence="2">
    <location>
        <begin position="90"/>
        <end position="92"/>
    </location>
</feature>
<feature type="helix" evidence="2">
    <location>
        <begin position="106"/>
        <end position="114"/>
    </location>
</feature>
<feature type="strand" evidence="2">
    <location>
        <begin position="116"/>
        <end position="124"/>
    </location>
</feature>
<feature type="helix" evidence="2">
    <location>
        <begin position="125"/>
        <end position="127"/>
    </location>
</feature>
<feature type="strand" evidence="2">
    <location>
        <begin position="130"/>
        <end position="132"/>
    </location>
</feature>
<feature type="strand" evidence="2">
    <location>
        <begin position="137"/>
        <end position="141"/>
    </location>
</feature>
<feature type="helix" evidence="2">
    <location>
        <begin position="143"/>
        <end position="145"/>
    </location>
</feature>
<feature type="helix" evidence="2">
    <location>
        <begin position="146"/>
        <end position="155"/>
    </location>
</feature>
<feature type="strand" evidence="2">
    <location>
        <begin position="159"/>
        <end position="162"/>
    </location>
</feature>
<feature type="strand" evidence="2">
    <location>
        <begin position="173"/>
        <end position="179"/>
    </location>
</feature>
<feature type="helix" evidence="2">
    <location>
        <begin position="185"/>
        <end position="193"/>
    </location>
</feature>
<feature type="strand" evidence="2">
    <location>
        <begin position="198"/>
        <end position="204"/>
    </location>
</feature>
<feature type="strand" evidence="2">
    <location>
        <begin position="210"/>
        <end position="215"/>
    </location>
</feature>
<feature type="strand" evidence="2">
    <location>
        <begin position="221"/>
        <end position="224"/>
    </location>
</feature>
<gene>
    <name evidence="1" type="primary">rpiA</name>
    <name type="ordered locus">FTW_1255</name>
</gene>
<proteinExistence type="evidence at protein level"/>
<protein>
    <recommendedName>
        <fullName evidence="1">Ribose-5-phosphate isomerase A</fullName>
        <ecNumber evidence="1">5.3.1.6</ecNumber>
    </recommendedName>
    <alternativeName>
        <fullName evidence="1">Phosphoriboisomerase A</fullName>
        <shortName evidence="1">PRI</shortName>
    </alternativeName>
</protein>
<comment type="function">
    <text evidence="1">Catalyzes the reversible conversion of ribose-5-phosphate to ribulose 5-phosphate.</text>
</comment>
<comment type="catalytic activity">
    <reaction evidence="1">
        <text>aldehydo-D-ribose 5-phosphate = D-ribulose 5-phosphate</text>
        <dbReference type="Rhea" id="RHEA:14657"/>
        <dbReference type="ChEBI" id="CHEBI:58121"/>
        <dbReference type="ChEBI" id="CHEBI:58273"/>
        <dbReference type="EC" id="5.3.1.6"/>
    </reaction>
</comment>
<comment type="pathway">
    <text evidence="1">Carbohydrate degradation; pentose phosphate pathway; D-ribose 5-phosphate from D-ribulose 5-phosphate (non-oxidative stage): step 1/1.</text>
</comment>
<comment type="subunit">
    <text evidence="1">Homodimer.</text>
</comment>
<comment type="similarity">
    <text evidence="1">Belongs to the ribose 5-phosphate isomerase family.</text>
</comment>
<reference key="1">
    <citation type="journal article" date="2007" name="PLoS ONE">
        <title>Complete genomic characterization of a pathogenic A.II strain of Francisella tularensis subspecies tularensis.</title>
        <authorList>
            <person name="Beckstrom-Sternberg S.M."/>
            <person name="Auerbach R.K."/>
            <person name="Godbole S."/>
            <person name="Pearson J.V."/>
            <person name="Beckstrom-Sternberg J.S."/>
            <person name="Deng Z."/>
            <person name="Munk C."/>
            <person name="Kubota K."/>
            <person name="Zhou Y."/>
            <person name="Bruce D."/>
            <person name="Noronha J."/>
            <person name="Scheuermann R.H."/>
            <person name="Wang A."/>
            <person name="Wei X."/>
            <person name="Wang J."/>
            <person name="Hao J."/>
            <person name="Wagner D.M."/>
            <person name="Brettin T.S."/>
            <person name="Brown N."/>
            <person name="Gilna P."/>
            <person name="Keim P.S."/>
        </authorList>
    </citation>
    <scope>NUCLEOTIDE SEQUENCE [LARGE SCALE GENOMIC DNA]</scope>
    <source>
        <strain>WY96-3418</strain>
    </source>
</reference>
<name>RPIA_FRATW</name>
<sequence>MFFNKKNNQDELKKLAATEAAKSITTEITLGVGTGSTVGFLIEELVNYRDKIKTVVSSSEDSTRKLKALGFDVVDLNYAGEIDLYIDGADECNNHKELIKGGGAALTREKICVAAAKKFICIIDESKKVNTLGNFPLPIEVIPMARSYIARQIVKLGGQPVYREQTITDNGNVILDVYNLKIDNPLKLETELNQITGVVTNGIFALKPADTVIMATKDSNIVVL</sequence>
<organism>
    <name type="scientific">Francisella tularensis subsp. tularensis (strain WY96-3418)</name>
    <dbReference type="NCBI Taxonomy" id="418136"/>
    <lineage>
        <taxon>Bacteria</taxon>
        <taxon>Pseudomonadati</taxon>
        <taxon>Pseudomonadota</taxon>
        <taxon>Gammaproteobacteria</taxon>
        <taxon>Thiotrichales</taxon>
        <taxon>Francisellaceae</taxon>
        <taxon>Francisella</taxon>
    </lineage>
</organism>
<keyword id="KW-0002">3D-structure</keyword>
<keyword id="KW-0413">Isomerase</keyword>
<dbReference type="EC" id="5.3.1.6" evidence="1"/>
<dbReference type="EMBL" id="CP000608">
    <property type="protein sequence ID" value="ABO47036.1"/>
    <property type="molecule type" value="Genomic_DNA"/>
</dbReference>
<dbReference type="RefSeq" id="WP_003015241.1">
    <property type="nucleotide sequence ID" value="NC_009257.1"/>
</dbReference>
<dbReference type="PDB" id="4M8L">
    <property type="method" value="X-ray"/>
    <property type="resolution" value="2.37 A"/>
    <property type="chains" value="A/B/C/D=1-224"/>
</dbReference>
<dbReference type="PDBsum" id="4M8L"/>
<dbReference type="SMR" id="A4IYN5"/>
<dbReference type="KEGG" id="ftw:FTW_1255"/>
<dbReference type="HOGENOM" id="CLU_056590_1_1_6"/>
<dbReference type="UniPathway" id="UPA00115">
    <property type="reaction ID" value="UER00412"/>
</dbReference>
<dbReference type="EvolutionaryTrace" id="A4IYN5"/>
<dbReference type="GO" id="GO:0005829">
    <property type="term" value="C:cytosol"/>
    <property type="evidence" value="ECO:0007669"/>
    <property type="project" value="TreeGrafter"/>
</dbReference>
<dbReference type="GO" id="GO:0004751">
    <property type="term" value="F:ribose-5-phosphate isomerase activity"/>
    <property type="evidence" value="ECO:0007669"/>
    <property type="project" value="UniProtKB-UniRule"/>
</dbReference>
<dbReference type="GO" id="GO:0006014">
    <property type="term" value="P:D-ribose metabolic process"/>
    <property type="evidence" value="ECO:0007669"/>
    <property type="project" value="TreeGrafter"/>
</dbReference>
<dbReference type="GO" id="GO:0009052">
    <property type="term" value="P:pentose-phosphate shunt, non-oxidative branch"/>
    <property type="evidence" value="ECO:0007669"/>
    <property type="project" value="UniProtKB-UniRule"/>
</dbReference>
<dbReference type="CDD" id="cd01398">
    <property type="entry name" value="RPI_A"/>
    <property type="match status" value="1"/>
</dbReference>
<dbReference type="FunFam" id="3.30.70.260:FF:000004">
    <property type="entry name" value="Ribose-5-phosphate isomerase A"/>
    <property type="match status" value="1"/>
</dbReference>
<dbReference type="FunFam" id="3.40.50.1360:FF:000001">
    <property type="entry name" value="Ribose-5-phosphate isomerase A"/>
    <property type="match status" value="1"/>
</dbReference>
<dbReference type="Gene3D" id="3.30.70.260">
    <property type="match status" value="1"/>
</dbReference>
<dbReference type="Gene3D" id="3.40.50.1360">
    <property type="match status" value="1"/>
</dbReference>
<dbReference type="HAMAP" id="MF_00170">
    <property type="entry name" value="Rib_5P_isom_A"/>
    <property type="match status" value="1"/>
</dbReference>
<dbReference type="InterPro" id="IPR037171">
    <property type="entry name" value="NagB/RpiA_transferase-like"/>
</dbReference>
<dbReference type="InterPro" id="IPR020672">
    <property type="entry name" value="Ribose5P_isomerase_typA_subgr"/>
</dbReference>
<dbReference type="InterPro" id="IPR004788">
    <property type="entry name" value="Ribose5P_isomerase_type_A"/>
</dbReference>
<dbReference type="NCBIfam" id="NF001924">
    <property type="entry name" value="PRK00702.1"/>
    <property type="match status" value="1"/>
</dbReference>
<dbReference type="NCBIfam" id="TIGR00021">
    <property type="entry name" value="rpiA"/>
    <property type="match status" value="1"/>
</dbReference>
<dbReference type="PANTHER" id="PTHR11934">
    <property type="entry name" value="RIBOSE-5-PHOSPHATE ISOMERASE"/>
    <property type="match status" value="1"/>
</dbReference>
<dbReference type="PANTHER" id="PTHR11934:SF0">
    <property type="entry name" value="RIBOSE-5-PHOSPHATE ISOMERASE"/>
    <property type="match status" value="1"/>
</dbReference>
<dbReference type="Pfam" id="PF06026">
    <property type="entry name" value="Rib_5-P_isom_A"/>
    <property type="match status" value="1"/>
</dbReference>
<dbReference type="SUPFAM" id="SSF75445">
    <property type="entry name" value="D-ribose-5-phosphate isomerase (RpiA), lid domain"/>
    <property type="match status" value="1"/>
</dbReference>
<dbReference type="SUPFAM" id="SSF100950">
    <property type="entry name" value="NagB/RpiA/CoA transferase-like"/>
    <property type="match status" value="1"/>
</dbReference>
<accession>A4IYN5</accession>
<evidence type="ECO:0000255" key="1">
    <source>
        <dbReference type="HAMAP-Rule" id="MF_00170"/>
    </source>
</evidence>
<evidence type="ECO:0007829" key="2">
    <source>
        <dbReference type="PDB" id="4M8L"/>
    </source>
</evidence>